<accession>Q1AS06</accession>
<gene>
    <name evidence="1" type="primary">potA</name>
    <name type="ordered locus">Rxyl_2912</name>
</gene>
<name>POTA_RUBXD</name>
<keyword id="KW-0067">ATP-binding</keyword>
<keyword id="KW-1003">Cell membrane</keyword>
<keyword id="KW-0472">Membrane</keyword>
<keyword id="KW-0547">Nucleotide-binding</keyword>
<keyword id="KW-1185">Reference proteome</keyword>
<keyword id="KW-1278">Translocase</keyword>
<keyword id="KW-0813">Transport</keyword>
<organism>
    <name type="scientific">Rubrobacter xylanophilus (strain DSM 9941 / JCM 11954 / NBRC 16129 / PRD-1)</name>
    <dbReference type="NCBI Taxonomy" id="266117"/>
    <lineage>
        <taxon>Bacteria</taxon>
        <taxon>Bacillati</taxon>
        <taxon>Actinomycetota</taxon>
        <taxon>Rubrobacteria</taxon>
        <taxon>Rubrobacterales</taxon>
        <taxon>Rubrobacteraceae</taxon>
        <taxon>Rubrobacter</taxon>
    </lineage>
</organism>
<reference key="1">
    <citation type="submission" date="2006-06" db="EMBL/GenBank/DDBJ databases">
        <title>Complete sequence of Rubrobacter xylanophilus DSM 9941.</title>
        <authorList>
            <consortium name="US DOE Joint Genome Institute"/>
            <person name="Copeland A."/>
            <person name="Lucas S."/>
            <person name="Lapidus A."/>
            <person name="Barry K."/>
            <person name="Detter J.C."/>
            <person name="Glavina del Rio T."/>
            <person name="Hammon N."/>
            <person name="Israni S."/>
            <person name="Dalin E."/>
            <person name="Tice H."/>
            <person name="Pitluck S."/>
            <person name="Munk A.C."/>
            <person name="Brettin T."/>
            <person name="Bruce D."/>
            <person name="Han C."/>
            <person name="Tapia R."/>
            <person name="Gilna P."/>
            <person name="Schmutz J."/>
            <person name="Larimer F."/>
            <person name="Land M."/>
            <person name="Hauser L."/>
            <person name="Kyrpides N."/>
            <person name="Lykidis A."/>
            <person name="da Costa M.S."/>
            <person name="Rainey F.A."/>
            <person name="Empadinhas N."/>
            <person name="Jolivet E."/>
            <person name="Battista J.R."/>
            <person name="Richardson P."/>
        </authorList>
    </citation>
    <scope>NUCLEOTIDE SEQUENCE [LARGE SCALE GENOMIC DNA]</scope>
    <source>
        <strain>DSM 9941 / JCM 11954 / NBRC 16129 / PRD-1</strain>
    </source>
</reference>
<proteinExistence type="inferred from homology"/>
<feature type="chain" id="PRO_0000286280" description="Spermidine/putrescine import ATP-binding protein PotA">
    <location>
        <begin position="1"/>
        <end position="377"/>
    </location>
</feature>
<feature type="domain" description="ABC transporter" evidence="1">
    <location>
        <begin position="22"/>
        <end position="252"/>
    </location>
</feature>
<feature type="binding site" evidence="1">
    <location>
        <begin position="54"/>
        <end position="61"/>
    </location>
    <ligand>
        <name>ATP</name>
        <dbReference type="ChEBI" id="CHEBI:30616"/>
    </ligand>
</feature>
<sequence>MERQNTAERRQGAREEGRPVAVRLQNVTKRFGDFTAVEDLSLDIHEGEFFSLLGPSGCGKTTTLRMIAGFEEPTEGEVVVAGRSMRGVPPYRRPVNTVFQSYALFPHLDVFENVAFGLRRAGVPKGEISRRVGEACALVKLSGFERRKPSRLSGGQQQRVALARALVNRPKVLLLDEPLGALDLKLRKQMQLELKNLQHEVGITFIYVTHDQEEALTMSDRIAVMNEGRVQQVADPATLYELPANRFVADFIGQTNILEGTVEAVEGERAVIRTAGGLRLEAVAPNGFRPAVGEAVEAAVRPEKLRVGEAGDNVVAAEVAEVVYLGSSTQYILRAPDGGRLVAHRQNDREAAALRPGEAVSVAWDARHCLILGGKRG</sequence>
<dbReference type="EC" id="7.6.2.11" evidence="1"/>
<dbReference type="EMBL" id="CP000386">
    <property type="protein sequence ID" value="ABG05822.1"/>
    <property type="molecule type" value="Genomic_DNA"/>
</dbReference>
<dbReference type="RefSeq" id="WP_011565831.1">
    <property type="nucleotide sequence ID" value="NC_008148.1"/>
</dbReference>
<dbReference type="SMR" id="Q1AS06"/>
<dbReference type="STRING" id="266117.Rxyl_2912"/>
<dbReference type="KEGG" id="rxy:Rxyl_2912"/>
<dbReference type="eggNOG" id="COG3842">
    <property type="taxonomic scope" value="Bacteria"/>
</dbReference>
<dbReference type="HOGENOM" id="CLU_000604_1_1_11"/>
<dbReference type="OrthoDB" id="9802264at2"/>
<dbReference type="PhylomeDB" id="Q1AS06"/>
<dbReference type="Proteomes" id="UP000006637">
    <property type="component" value="Chromosome"/>
</dbReference>
<dbReference type="GO" id="GO:0043190">
    <property type="term" value="C:ATP-binding cassette (ABC) transporter complex"/>
    <property type="evidence" value="ECO:0007669"/>
    <property type="project" value="InterPro"/>
</dbReference>
<dbReference type="GO" id="GO:0015594">
    <property type="term" value="F:ABC-type putrescine transporter activity"/>
    <property type="evidence" value="ECO:0007669"/>
    <property type="project" value="InterPro"/>
</dbReference>
<dbReference type="GO" id="GO:0005524">
    <property type="term" value="F:ATP binding"/>
    <property type="evidence" value="ECO:0007669"/>
    <property type="project" value="UniProtKB-KW"/>
</dbReference>
<dbReference type="GO" id="GO:0016887">
    <property type="term" value="F:ATP hydrolysis activity"/>
    <property type="evidence" value="ECO:0007669"/>
    <property type="project" value="InterPro"/>
</dbReference>
<dbReference type="CDD" id="cd03300">
    <property type="entry name" value="ABC_PotA_N"/>
    <property type="match status" value="1"/>
</dbReference>
<dbReference type="FunFam" id="3.40.50.300:FF:000133">
    <property type="entry name" value="Spermidine/putrescine import ATP-binding protein PotA"/>
    <property type="match status" value="1"/>
</dbReference>
<dbReference type="Gene3D" id="2.40.50.100">
    <property type="match status" value="1"/>
</dbReference>
<dbReference type="Gene3D" id="2.40.50.140">
    <property type="entry name" value="Nucleic acid-binding proteins"/>
    <property type="match status" value="1"/>
</dbReference>
<dbReference type="Gene3D" id="3.40.50.300">
    <property type="entry name" value="P-loop containing nucleotide triphosphate hydrolases"/>
    <property type="match status" value="1"/>
</dbReference>
<dbReference type="InterPro" id="IPR003593">
    <property type="entry name" value="AAA+_ATPase"/>
</dbReference>
<dbReference type="InterPro" id="IPR050093">
    <property type="entry name" value="ABC_SmlMolc_Importer"/>
</dbReference>
<dbReference type="InterPro" id="IPR003439">
    <property type="entry name" value="ABC_transporter-like_ATP-bd"/>
</dbReference>
<dbReference type="InterPro" id="IPR017871">
    <property type="entry name" value="ABC_transporter-like_CS"/>
</dbReference>
<dbReference type="InterPro" id="IPR008995">
    <property type="entry name" value="Mo/tungstate-bd_C_term_dom"/>
</dbReference>
<dbReference type="InterPro" id="IPR012340">
    <property type="entry name" value="NA-bd_OB-fold"/>
</dbReference>
<dbReference type="InterPro" id="IPR027417">
    <property type="entry name" value="P-loop_NTPase"/>
</dbReference>
<dbReference type="InterPro" id="IPR005893">
    <property type="entry name" value="PotA-like"/>
</dbReference>
<dbReference type="InterPro" id="IPR017879">
    <property type="entry name" value="PotA_ATP-bd"/>
</dbReference>
<dbReference type="InterPro" id="IPR013611">
    <property type="entry name" value="Transp-assoc_OB_typ2"/>
</dbReference>
<dbReference type="NCBIfam" id="TIGR01187">
    <property type="entry name" value="potA"/>
    <property type="match status" value="1"/>
</dbReference>
<dbReference type="PANTHER" id="PTHR42781">
    <property type="entry name" value="SPERMIDINE/PUTRESCINE IMPORT ATP-BINDING PROTEIN POTA"/>
    <property type="match status" value="1"/>
</dbReference>
<dbReference type="PANTHER" id="PTHR42781:SF4">
    <property type="entry name" value="SPERMIDINE_PUTRESCINE IMPORT ATP-BINDING PROTEIN POTA"/>
    <property type="match status" value="1"/>
</dbReference>
<dbReference type="Pfam" id="PF00005">
    <property type="entry name" value="ABC_tran"/>
    <property type="match status" value="1"/>
</dbReference>
<dbReference type="Pfam" id="PF08402">
    <property type="entry name" value="TOBE_2"/>
    <property type="match status" value="1"/>
</dbReference>
<dbReference type="SMART" id="SM00382">
    <property type="entry name" value="AAA"/>
    <property type="match status" value="1"/>
</dbReference>
<dbReference type="SUPFAM" id="SSF50331">
    <property type="entry name" value="MOP-like"/>
    <property type="match status" value="1"/>
</dbReference>
<dbReference type="SUPFAM" id="SSF52540">
    <property type="entry name" value="P-loop containing nucleoside triphosphate hydrolases"/>
    <property type="match status" value="1"/>
</dbReference>
<dbReference type="PROSITE" id="PS00211">
    <property type="entry name" value="ABC_TRANSPORTER_1"/>
    <property type="match status" value="1"/>
</dbReference>
<dbReference type="PROSITE" id="PS50893">
    <property type="entry name" value="ABC_TRANSPORTER_2"/>
    <property type="match status" value="1"/>
</dbReference>
<dbReference type="PROSITE" id="PS51305">
    <property type="entry name" value="POTA"/>
    <property type="match status" value="1"/>
</dbReference>
<protein>
    <recommendedName>
        <fullName evidence="1">Spermidine/putrescine import ATP-binding protein PotA</fullName>
        <ecNumber evidence="1">7.6.2.11</ecNumber>
    </recommendedName>
</protein>
<comment type="function">
    <text evidence="1">Part of the ABC transporter complex PotABCD involved in spermidine/putrescine import. Responsible for energy coupling to the transport system.</text>
</comment>
<comment type="catalytic activity">
    <reaction evidence="1">
        <text>ATP + H2O + polyamine-[polyamine-binding protein]Side 1 = ADP + phosphate + polyamineSide 2 + [polyamine-binding protein]Side 1.</text>
        <dbReference type="EC" id="7.6.2.11"/>
    </reaction>
</comment>
<comment type="subunit">
    <text evidence="1">The complex is composed of two ATP-binding proteins (PotA), two transmembrane proteins (PotB and PotC) and a solute-binding protein (PotD).</text>
</comment>
<comment type="subcellular location">
    <subcellularLocation>
        <location evidence="1">Cell membrane</location>
        <topology evidence="1">Peripheral membrane protein</topology>
    </subcellularLocation>
</comment>
<comment type="similarity">
    <text evidence="1">Belongs to the ABC transporter superfamily. Spermidine/putrescine importer (TC 3.A.1.11.1) family.</text>
</comment>
<evidence type="ECO:0000255" key="1">
    <source>
        <dbReference type="HAMAP-Rule" id="MF_01726"/>
    </source>
</evidence>